<evidence type="ECO:0000255" key="1">
    <source>
        <dbReference type="HAMAP-Rule" id="MF_01334"/>
    </source>
</evidence>
<evidence type="ECO:0000305" key="2"/>
<comment type="function">
    <text evidence="1">This is one of the proteins that binds to the 5S RNA in the ribosome where it forms part of the central protuberance.</text>
</comment>
<comment type="subunit">
    <text evidence="1">Part of the 50S ribosomal subunit; part of the 5S rRNA/L5/L18/L25 subcomplex. Contacts the 5S rRNA. Binds to the 5S rRNA independently of L5 and L18.</text>
</comment>
<comment type="similarity">
    <text evidence="1">Belongs to the bacterial ribosomal protein bL25 family. CTC subfamily.</text>
</comment>
<gene>
    <name evidence="1" type="primary">rplY</name>
    <name evidence="1" type="synonym">ctc</name>
    <name type="ordered locus">BARBAKC583_0999</name>
</gene>
<name>RL25_BARBK</name>
<protein>
    <recommendedName>
        <fullName evidence="1">Large ribosomal subunit protein bL25</fullName>
    </recommendedName>
    <alternativeName>
        <fullName evidence="2">50S ribosomal protein L25</fullName>
    </alternativeName>
    <alternativeName>
        <fullName evidence="1">General stress protein CTC</fullName>
    </alternativeName>
</protein>
<feature type="chain" id="PRO_1000052868" description="Large ribosomal subunit protein bL25">
    <location>
        <begin position="1"/>
        <end position="205"/>
    </location>
</feature>
<accession>A1UTH4</accession>
<dbReference type="EMBL" id="CP000524">
    <property type="protein sequence ID" value="ABM45669.1"/>
    <property type="molecule type" value="Genomic_DNA"/>
</dbReference>
<dbReference type="RefSeq" id="WP_005767521.1">
    <property type="nucleotide sequence ID" value="NC_008783.1"/>
</dbReference>
<dbReference type="SMR" id="A1UTH4"/>
<dbReference type="STRING" id="360095.BARBAKC583_0999"/>
<dbReference type="GeneID" id="4684568"/>
<dbReference type="KEGG" id="bbk:BARBAKC583_0999"/>
<dbReference type="PATRIC" id="fig|360095.6.peg.967"/>
<dbReference type="eggNOG" id="COG1825">
    <property type="taxonomic scope" value="Bacteria"/>
</dbReference>
<dbReference type="HOGENOM" id="CLU_075939_0_0_5"/>
<dbReference type="OrthoDB" id="9806411at2"/>
<dbReference type="Proteomes" id="UP000000643">
    <property type="component" value="Chromosome"/>
</dbReference>
<dbReference type="GO" id="GO:0022625">
    <property type="term" value="C:cytosolic large ribosomal subunit"/>
    <property type="evidence" value="ECO:0007669"/>
    <property type="project" value="TreeGrafter"/>
</dbReference>
<dbReference type="GO" id="GO:0008097">
    <property type="term" value="F:5S rRNA binding"/>
    <property type="evidence" value="ECO:0007669"/>
    <property type="project" value="InterPro"/>
</dbReference>
<dbReference type="GO" id="GO:0003735">
    <property type="term" value="F:structural constituent of ribosome"/>
    <property type="evidence" value="ECO:0007669"/>
    <property type="project" value="InterPro"/>
</dbReference>
<dbReference type="GO" id="GO:0006412">
    <property type="term" value="P:translation"/>
    <property type="evidence" value="ECO:0007669"/>
    <property type="project" value="UniProtKB-UniRule"/>
</dbReference>
<dbReference type="CDD" id="cd00495">
    <property type="entry name" value="Ribosomal_L25_TL5_CTC"/>
    <property type="match status" value="1"/>
</dbReference>
<dbReference type="Gene3D" id="2.170.120.20">
    <property type="entry name" value="Ribosomal protein L25, beta domain"/>
    <property type="match status" value="1"/>
</dbReference>
<dbReference type="Gene3D" id="2.40.240.10">
    <property type="entry name" value="Ribosomal Protein L25, Chain P"/>
    <property type="match status" value="1"/>
</dbReference>
<dbReference type="HAMAP" id="MF_01334">
    <property type="entry name" value="Ribosomal_bL25_CTC"/>
    <property type="match status" value="1"/>
</dbReference>
<dbReference type="InterPro" id="IPR020056">
    <property type="entry name" value="Rbsml_bL25/Gln-tRNA_synth_N"/>
</dbReference>
<dbReference type="InterPro" id="IPR011035">
    <property type="entry name" value="Ribosomal_bL25/Gln-tRNA_synth"/>
</dbReference>
<dbReference type="InterPro" id="IPR020057">
    <property type="entry name" value="Ribosomal_bL25_b-dom"/>
</dbReference>
<dbReference type="InterPro" id="IPR037121">
    <property type="entry name" value="Ribosomal_bL25_C"/>
</dbReference>
<dbReference type="InterPro" id="IPR001021">
    <property type="entry name" value="Ribosomal_bL25_long"/>
</dbReference>
<dbReference type="InterPro" id="IPR029751">
    <property type="entry name" value="Ribosomal_L25_dom"/>
</dbReference>
<dbReference type="InterPro" id="IPR020930">
    <property type="entry name" value="Ribosomal_uL5_bac-type"/>
</dbReference>
<dbReference type="NCBIfam" id="TIGR00731">
    <property type="entry name" value="bL25_bact_ctc"/>
    <property type="match status" value="1"/>
</dbReference>
<dbReference type="NCBIfam" id="NF004128">
    <property type="entry name" value="PRK05618.1-2"/>
    <property type="match status" value="1"/>
</dbReference>
<dbReference type="NCBIfam" id="NF004612">
    <property type="entry name" value="PRK05943.1"/>
    <property type="match status" value="1"/>
</dbReference>
<dbReference type="PANTHER" id="PTHR33284">
    <property type="entry name" value="RIBOSOMAL PROTEIN L25/GLN-TRNA SYNTHETASE, ANTI-CODON-BINDING DOMAIN-CONTAINING PROTEIN"/>
    <property type="match status" value="1"/>
</dbReference>
<dbReference type="PANTHER" id="PTHR33284:SF1">
    <property type="entry name" value="RIBOSOMAL PROTEIN L25_GLN-TRNA SYNTHETASE, ANTI-CODON-BINDING DOMAIN-CONTAINING PROTEIN"/>
    <property type="match status" value="1"/>
</dbReference>
<dbReference type="Pfam" id="PF01386">
    <property type="entry name" value="Ribosomal_L25p"/>
    <property type="match status" value="1"/>
</dbReference>
<dbReference type="Pfam" id="PF14693">
    <property type="entry name" value="Ribosomal_TL5_C"/>
    <property type="match status" value="1"/>
</dbReference>
<dbReference type="SUPFAM" id="SSF50715">
    <property type="entry name" value="Ribosomal protein L25-like"/>
    <property type="match status" value="1"/>
</dbReference>
<organism>
    <name type="scientific">Bartonella bacilliformis (strain ATCC 35685 / KC583 / Herrer 020/F12,63)</name>
    <dbReference type="NCBI Taxonomy" id="360095"/>
    <lineage>
        <taxon>Bacteria</taxon>
        <taxon>Pseudomonadati</taxon>
        <taxon>Pseudomonadota</taxon>
        <taxon>Alphaproteobacteria</taxon>
        <taxon>Hyphomicrobiales</taxon>
        <taxon>Bartonellaceae</taxon>
        <taxon>Bartonella</taxon>
    </lineage>
</organism>
<reference key="1">
    <citation type="submission" date="2006-12" db="EMBL/GenBank/DDBJ databases">
        <authorList>
            <person name="Hendrix L."/>
            <person name="Mohamoud Y."/>
            <person name="Radune D."/>
            <person name="Shvartsbeyn A."/>
            <person name="Daugherty S."/>
            <person name="Dodson R."/>
            <person name="Durkin A.S."/>
            <person name="Harkins D."/>
            <person name="Huot H."/>
            <person name="Kothari S.P."/>
            <person name="Madupu R."/>
            <person name="Li J."/>
            <person name="Nelson W.C."/>
            <person name="Shrivastava S."/>
            <person name="Giglio M.G."/>
            <person name="Haft D."/>
            <person name="Selengut J."/>
            <person name="Fraser-Ligget C."/>
            <person name="Seshadri R."/>
        </authorList>
    </citation>
    <scope>NUCLEOTIDE SEQUENCE [LARGE SCALE GENOMIC DNA]</scope>
    <source>
        <strain>ATCC 35685 / KC583 / Herrer 020/F12,63</strain>
    </source>
</reference>
<proteinExistence type="inferred from homology"/>
<keyword id="KW-0687">Ribonucleoprotein</keyword>
<keyword id="KW-0689">Ribosomal protein</keyword>
<keyword id="KW-0694">RNA-binding</keyword>
<keyword id="KW-0699">rRNA-binding</keyword>
<sequence length="205" mass="22491">MSKSYTLKAEVRERVGKGSSRELRRNGFIPAVIYGDKQPPLAISVPYKEVFYKIHGGGFRTTIATLEIGKEKIQVLPKDYQLDPVRDFPMHVDFLRVSAKSIVHVNIPVHFLNEDTAPGIKRGGVLNIVRHEIECTAPANAIPDAIQIDLSSYSIGDSIHISAVQLPEGVTPVIQDRNFTIATIAAPAGMGDTSEEENNESDAKK</sequence>